<feature type="chain" id="PRO_1000054645" description="Large ribosomal subunit protein uL16">
    <location>
        <begin position="1"/>
        <end position="137"/>
    </location>
</feature>
<feature type="region of interest" description="Disordered" evidence="2">
    <location>
        <begin position="1"/>
        <end position="24"/>
    </location>
</feature>
<feature type="compositionally biased region" description="Basic residues" evidence="2">
    <location>
        <begin position="1"/>
        <end position="17"/>
    </location>
</feature>
<gene>
    <name evidence="1" type="primary">rplP</name>
    <name type="ordered locus">LBJ_2652</name>
</gene>
<sequence>MLSPKRVKFRKRQRGRLKGTDERGSSVSFGEFGLKAVTSGRLTARQIEAARITINRQVKRGGKLWIRIFPHTPITKKPAETRMGKGKGNPEFWIAEIRPGRILFEMSGIDEETAEKALSLASYKLPIHTEFVKRSAL</sequence>
<name>RL16_LEPBJ</name>
<comment type="function">
    <text evidence="1">Binds 23S rRNA and is also seen to make contacts with the A and possibly P site tRNAs.</text>
</comment>
<comment type="subunit">
    <text evidence="1">Part of the 50S ribosomal subunit.</text>
</comment>
<comment type="similarity">
    <text evidence="1">Belongs to the universal ribosomal protein uL16 family.</text>
</comment>
<keyword id="KW-0687">Ribonucleoprotein</keyword>
<keyword id="KW-0689">Ribosomal protein</keyword>
<keyword id="KW-0694">RNA-binding</keyword>
<keyword id="KW-0699">rRNA-binding</keyword>
<keyword id="KW-0820">tRNA-binding</keyword>
<accession>Q04PU5</accession>
<dbReference type="EMBL" id="CP000350">
    <property type="protein sequence ID" value="ABJ77075.1"/>
    <property type="molecule type" value="Genomic_DNA"/>
</dbReference>
<dbReference type="RefSeq" id="WP_011669435.1">
    <property type="nucleotide sequence ID" value="NC_008510.1"/>
</dbReference>
<dbReference type="SMR" id="Q04PU5"/>
<dbReference type="KEGG" id="lbj:LBJ_2652"/>
<dbReference type="HOGENOM" id="CLU_078858_2_1_12"/>
<dbReference type="Proteomes" id="UP000000656">
    <property type="component" value="Chromosome 1"/>
</dbReference>
<dbReference type="GO" id="GO:0022625">
    <property type="term" value="C:cytosolic large ribosomal subunit"/>
    <property type="evidence" value="ECO:0007669"/>
    <property type="project" value="TreeGrafter"/>
</dbReference>
<dbReference type="GO" id="GO:0019843">
    <property type="term" value="F:rRNA binding"/>
    <property type="evidence" value="ECO:0007669"/>
    <property type="project" value="UniProtKB-UniRule"/>
</dbReference>
<dbReference type="GO" id="GO:0003735">
    <property type="term" value="F:structural constituent of ribosome"/>
    <property type="evidence" value="ECO:0007669"/>
    <property type="project" value="InterPro"/>
</dbReference>
<dbReference type="GO" id="GO:0000049">
    <property type="term" value="F:tRNA binding"/>
    <property type="evidence" value="ECO:0007669"/>
    <property type="project" value="UniProtKB-KW"/>
</dbReference>
<dbReference type="GO" id="GO:0006412">
    <property type="term" value="P:translation"/>
    <property type="evidence" value="ECO:0007669"/>
    <property type="project" value="UniProtKB-UniRule"/>
</dbReference>
<dbReference type="CDD" id="cd01433">
    <property type="entry name" value="Ribosomal_L16_L10e"/>
    <property type="match status" value="1"/>
</dbReference>
<dbReference type="FunFam" id="3.90.1170.10:FF:000001">
    <property type="entry name" value="50S ribosomal protein L16"/>
    <property type="match status" value="1"/>
</dbReference>
<dbReference type="Gene3D" id="3.90.1170.10">
    <property type="entry name" value="Ribosomal protein L10e/L16"/>
    <property type="match status" value="1"/>
</dbReference>
<dbReference type="HAMAP" id="MF_01342">
    <property type="entry name" value="Ribosomal_uL16"/>
    <property type="match status" value="1"/>
</dbReference>
<dbReference type="InterPro" id="IPR047873">
    <property type="entry name" value="Ribosomal_uL16"/>
</dbReference>
<dbReference type="InterPro" id="IPR000114">
    <property type="entry name" value="Ribosomal_uL16_bact-type"/>
</dbReference>
<dbReference type="InterPro" id="IPR020798">
    <property type="entry name" value="Ribosomal_uL16_CS"/>
</dbReference>
<dbReference type="InterPro" id="IPR016180">
    <property type="entry name" value="Ribosomal_uL16_dom"/>
</dbReference>
<dbReference type="InterPro" id="IPR036920">
    <property type="entry name" value="Ribosomal_uL16_sf"/>
</dbReference>
<dbReference type="NCBIfam" id="TIGR01164">
    <property type="entry name" value="rplP_bact"/>
    <property type="match status" value="1"/>
</dbReference>
<dbReference type="PANTHER" id="PTHR12220">
    <property type="entry name" value="50S/60S RIBOSOMAL PROTEIN L16"/>
    <property type="match status" value="1"/>
</dbReference>
<dbReference type="PANTHER" id="PTHR12220:SF13">
    <property type="entry name" value="LARGE RIBOSOMAL SUBUNIT PROTEIN UL16M"/>
    <property type="match status" value="1"/>
</dbReference>
<dbReference type="Pfam" id="PF00252">
    <property type="entry name" value="Ribosomal_L16"/>
    <property type="match status" value="1"/>
</dbReference>
<dbReference type="PRINTS" id="PR00060">
    <property type="entry name" value="RIBOSOMALL16"/>
</dbReference>
<dbReference type="SUPFAM" id="SSF54686">
    <property type="entry name" value="Ribosomal protein L16p/L10e"/>
    <property type="match status" value="1"/>
</dbReference>
<dbReference type="PROSITE" id="PS00586">
    <property type="entry name" value="RIBOSOMAL_L16_1"/>
    <property type="match status" value="1"/>
</dbReference>
<dbReference type="PROSITE" id="PS00701">
    <property type="entry name" value="RIBOSOMAL_L16_2"/>
    <property type="match status" value="1"/>
</dbReference>
<reference key="1">
    <citation type="journal article" date="2006" name="Proc. Natl. Acad. Sci. U.S.A.">
        <title>Genome reduction in Leptospira borgpetersenii reflects limited transmission potential.</title>
        <authorList>
            <person name="Bulach D.M."/>
            <person name="Zuerner R.L."/>
            <person name="Wilson P."/>
            <person name="Seemann T."/>
            <person name="McGrath A."/>
            <person name="Cullen P.A."/>
            <person name="Davis J."/>
            <person name="Johnson M."/>
            <person name="Kuczek E."/>
            <person name="Alt D.P."/>
            <person name="Peterson-Burch B."/>
            <person name="Coppel R.L."/>
            <person name="Rood J.I."/>
            <person name="Davies J.K."/>
            <person name="Adler B."/>
        </authorList>
    </citation>
    <scope>NUCLEOTIDE SEQUENCE [LARGE SCALE GENOMIC DNA]</scope>
    <source>
        <strain>JB197</strain>
    </source>
</reference>
<protein>
    <recommendedName>
        <fullName evidence="1">Large ribosomal subunit protein uL16</fullName>
    </recommendedName>
    <alternativeName>
        <fullName evidence="3">50S ribosomal protein L16</fullName>
    </alternativeName>
</protein>
<organism>
    <name type="scientific">Leptospira borgpetersenii serovar Hardjo-bovis (strain JB197)</name>
    <dbReference type="NCBI Taxonomy" id="355277"/>
    <lineage>
        <taxon>Bacteria</taxon>
        <taxon>Pseudomonadati</taxon>
        <taxon>Spirochaetota</taxon>
        <taxon>Spirochaetia</taxon>
        <taxon>Leptospirales</taxon>
        <taxon>Leptospiraceae</taxon>
        <taxon>Leptospira</taxon>
    </lineage>
</organism>
<proteinExistence type="inferred from homology"/>
<evidence type="ECO:0000255" key="1">
    <source>
        <dbReference type="HAMAP-Rule" id="MF_01342"/>
    </source>
</evidence>
<evidence type="ECO:0000256" key="2">
    <source>
        <dbReference type="SAM" id="MobiDB-lite"/>
    </source>
</evidence>
<evidence type="ECO:0000305" key="3"/>